<accession>P85847</accession>
<reference evidence="5" key="1">
    <citation type="journal article" date="2009" name="BMC Evol. Biol.">
        <title>A proteomic approach for studying insect phylogeny: CAPA peptides of ancient insect taxa (Dictyoptera, Blattoptera) as a test case.</title>
        <authorList>
            <person name="Roth S."/>
            <person name="Fromm B."/>
            <person name="Gaede G."/>
            <person name="Predel R."/>
        </authorList>
    </citation>
    <scope>PROTEIN SEQUENCE</scope>
    <scope>PYROGLUTAMATE FORMATION AT GLN-1</scope>
    <scope>SULFATION AT TYR-5</scope>
    <scope>AMIDATION AT PHE-10</scope>
</reference>
<dbReference type="GO" id="GO:0005576">
    <property type="term" value="C:extracellular region"/>
    <property type="evidence" value="ECO:0007669"/>
    <property type="project" value="UniProtKB-SubCell"/>
</dbReference>
<dbReference type="GO" id="GO:0005179">
    <property type="term" value="F:hormone activity"/>
    <property type="evidence" value="ECO:0007669"/>
    <property type="project" value="UniProtKB-KW"/>
</dbReference>
<dbReference type="GO" id="GO:0007218">
    <property type="term" value="P:neuropeptide signaling pathway"/>
    <property type="evidence" value="ECO:0007669"/>
    <property type="project" value="UniProtKB-KW"/>
</dbReference>
<dbReference type="InterPro" id="IPR013152">
    <property type="entry name" value="Gastrin/cholecystokinin_CS"/>
</dbReference>
<dbReference type="InterPro" id="IPR013259">
    <property type="entry name" value="Sulfakinin"/>
</dbReference>
<dbReference type="Pfam" id="PF08257">
    <property type="entry name" value="Sulfakinin"/>
    <property type="match status" value="1"/>
</dbReference>
<dbReference type="PROSITE" id="PS00259">
    <property type="entry name" value="GASTRIN"/>
    <property type="match status" value="1"/>
</dbReference>
<name>SK1_EURFL</name>
<keyword id="KW-0027">Amidation</keyword>
<keyword id="KW-0903">Direct protein sequencing</keyword>
<keyword id="KW-0372">Hormone</keyword>
<keyword id="KW-0527">Neuropeptide</keyword>
<keyword id="KW-0873">Pyrrolidone carboxylic acid</keyword>
<keyword id="KW-0964">Secreted</keyword>
<keyword id="KW-0765">Sulfation</keyword>
<sequence>QSDDYGHMRF</sequence>
<organism>
    <name type="scientific">Eurycotis floridana</name>
    <name type="common">Florida woods cockroach</name>
    <name type="synonym">Skunk roach</name>
    <dbReference type="NCBI Taxonomy" id="303877"/>
    <lineage>
        <taxon>Eukaryota</taxon>
        <taxon>Metazoa</taxon>
        <taxon>Ecdysozoa</taxon>
        <taxon>Arthropoda</taxon>
        <taxon>Hexapoda</taxon>
        <taxon>Insecta</taxon>
        <taxon>Pterygota</taxon>
        <taxon>Neoptera</taxon>
        <taxon>Polyneoptera</taxon>
        <taxon>Dictyoptera</taxon>
        <taxon>Blattodea</taxon>
        <taxon>Blattoidea</taxon>
        <taxon>Blattidae</taxon>
        <taxon>Eurycotiinae</taxon>
        <taxon>Eurycotis</taxon>
    </lineage>
</organism>
<feature type="peptide" id="PRO_0000378877" description="Sulfakinin-1" evidence="3">
    <location>
        <begin position="1"/>
        <end position="10"/>
    </location>
</feature>
<feature type="modified residue" description="Pyrrolidone carboxylic acid" evidence="3">
    <location>
        <position position="1"/>
    </location>
</feature>
<feature type="modified residue" description="Sulfotyrosine" evidence="3">
    <location>
        <position position="5"/>
    </location>
</feature>
<feature type="modified residue" description="Phenylalanine amide" evidence="3">
    <location>
        <position position="10"/>
    </location>
</feature>
<proteinExistence type="evidence at protein level"/>
<protein>
    <recommendedName>
        <fullName evidence="4">Sulfakinin-1</fullName>
        <shortName evidence="4">EurFl-SK-1</shortName>
    </recommendedName>
</protein>
<comment type="function">
    <text evidence="1">Myotropic peptide.</text>
</comment>
<comment type="subcellular location">
    <subcellularLocation>
        <location evidence="5">Secreted</location>
    </subcellularLocation>
</comment>
<comment type="similarity">
    <text evidence="2">Belongs to the gastrin/cholecystokinin family.</text>
</comment>
<evidence type="ECO:0000250" key="1">
    <source>
        <dbReference type="UniProtKB" id="P47733"/>
    </source>
</evidence>
<evidence type="ECO:0000255" key="2"/>
<evidence type="ECO:0000269" key="3">
    <source>
    </source>
</evidence>
<evidence type="ECO:0000303" key="4">
    <source>
    </source>
</evidence>
<evidence type="ECO:0000305" key="5"/>